<accession>Q8G1K5</accession>
<accession>G0K8C9</accession>
<dbReference type="EC" id="6.3.3.1" evidence="1"/>
<dbReference type="EMBL" id="AE014291">
    <property type="protein sequence ID" value="AAN29639.1"/>
    <property type="molecule type" value="Genomic_DNA"/>
</dbReference>
<dbReference type="EMBL" id="CP002997">
    <property type="protein sequence ID" value="AEM18056.1"/>
    <property type="molecule type" value="Genomic_DNA"/>
</dbReference>
<dbReference type="RefSeq" id="WP_002963853.1">
    <property type="nucleotide sequence ID" value="NZ_KN046804.1"/>
</dbReference>
<dbReference type="SMR" id="Q8G1K5"/>
<dbReference type="GeneID" id="93016888"/>
<dbReference type="KEGG" id="bms:BR0710"/>
<dbReference type="KEGG" id="bsi:BS1330_I0706"/>
<dbReference type="PATRIC" id="fig|204722.21.peg.3627"/>
<dbReference type="HOGENOM" id="CLU_047116_0_0_5"/>
<dbReference type="PhylomeDB" id="Q8G1K5"/>
<dbReference type="UniPathway" id="UPA00074">
    <property type="reaction ID" value="UER00129"/>
</dbReference>
<dbReference type="PRO" id="PR:Q8G1K5"/>
<dbReference type="Proteomes" id="UP000007104">
    <property type="component" value="Chromosome I"/>
</dbReference>
<dbReference type="GO" id="GO:0005829">
    <property type="term" value="C:cytosol"/>
    <property type="evidence" value="ECO:0007669"/>
    <property type="project" value="TreeGrafter"/>
</dbReference>
<dbReference type="GO" id="GO:0005524">
    <property type="term" value="F:ATP binding"/>
    <property type="evidence" value="ECO:0007669"/>
    <property type="project" value="UniProtKB-KW"/>
</dbReference>
<dbReference type="GO" id="GO:0004637">
    <property type="term" value="F:phosphoribosylamine-glycine ligase activity"/>
    <property type="evidence" value="ECO:0007669"/>
    <property type="project" value="TreeGrafter"/>
</dbReference>
<dbReference type="GO" id="GO:0004641">
    <property type="term" value="F:phosphoribosylformylglycinamidine cyclo-ligase activity"/>
    <property type="evidence" value="ECO:0007669"/>
    <property type="project" value="UniProtKB-UniRule"/>
</dbReference>
<dbReference type="GO" id="GO:0006189">
    <property type="term" value="P:'de novo' IMP biosynthetic process"/>
    <property type="evidence" value="ECO:0007669"/>
    <property type="project" value="UniProtKB-UniRule"/>
</dbReference>
<dbReference type="GO" id="GO:0046084">
    <property type="term" value="P:adenine biosynthetic process"/>
    <property type="evidence" value="ECO:0007669"/>
    <property type="project" value="TreeGrafter"/>
</dbReference>
<dbReference type="CDD" id="cd02196">
    <property type="entry name" value="PurM"/>
    <property type="match status" value="1"/>
</dbReference>
<dbReference type="FunFam" id="3.30.1330.10:FF:000001">
    <property type="entry name" value="Phosphoribosylformylglycinamidine cyclo-ligase"/>
    <property type="match status" value="1"/>
</dbReference>
<dbReference type="FunFam" id="3.90.650.10:FF:000019">
    <property type="entry name" value="Trifunctional purine biosynthetic protein adenosine-3"/>
    <property type="match status" value="1"/>
</dbReference>
<dbReference type="Gene3D" id="3.90.650.10">
    <property type="entry name" value="PurM-like C-terminal domain"/>
    <property type="match status" value="1"/>
</dbReference>
<dbReference type="Gene3D" id="3.30.1330.10">
    <property type="entry name" value="PurM-like, N-terminal domain"/>
    <property type="match status" value="1"/>
</dbReference>
<dbReference type="HAMAP" id="MF_00741">
    <property type="entry name" value="AIRS"/>
    <property type="match status" value="1"/>
</dbReference>
<dbReference type="InterPro" id="IPR010918">
    <property type="entry name" value="PurM-like_C_dom"/>
</dbReference>
<dbReference type="InterPro" id="IPR036676">
    <property type="entry name" value="PurM-like_C_sf"/>
</dbReference>
<dbReference type="InterPro" id="IPR016188">
    <property type="entry name" value="PurM-like_N"/>
</dbReference>
<dbReference type="InterPro" id="IPR036921">
    <property type="entry name" value="PurM-like_N_sf"/>
</dbReference>
<dbReference type="InterPro" id="IPR004733">
    <property type="entry name" value="PurM_cligase"/>
</dbReference>
<dbReference type="NCBIfam" id="TIGR00878">
    <property type="entry name" value="purM"/>
    <property type="match status" value="1"/>
</dbReference>
<dbReference type="PANTHER" id="PTHR10520:SF12">
    <property type="entry name" value="TRIFUNCTIONAL PURINE BIOSYNTHETIC PROTEIN ADENOSINE-3"/>
    <property type="match status" value="1"/>
</dbReference>
<dbReference type="PANTHER" id="PTHR10520">
    <property type="entry name" value="TRIFUNCTIONAL PURINE BIOSYNTHETIC PROTEIN ADENOSINE-3-RELATED"/>
    <property type="match status" value="1"/>
</dbReference>
<dbReference type="Pfam" id="PF00586">
    <property type="entry name" value="AIRS"/>
    <property type="match status" value="1"/>
</dbReference>
<dbReference type="Pfam" id="PF02769">
    <property type="entry name" value="AIRS_C"/>
    <property type="match status" value="1"/>
</dbReference>
<dbReference type="SUPFAM" id="SSF56042">
    <property type="entry name" value="PurM C-terminal domain-like"/>
    <property type="match status" value="1"/>
</dbReference>
<dbReference type="SUPFAM" id="SSF55326">
    <property type="entry name" value="PurM N-terminal domain-like"/>
    <property type="match status" value="1"/>
</dbReference>
<organism>
    <name type="scientific">Brucella suis biovar 1 (strain 1330)</name>
    <dbReference type="NCBI Taxonomy" id="204722"/>
    <lineage>
        <taxon>Bacteria</taxon>
        <taxon>Pseudomonadati</taxon>
        <taxon>Pseudomonadota</taxon>
        <taxon>Alphaproteobacteria</taxon>
        <taxon>Hyphomicrobiales</taxon>
        <taxon>Brucellaceae</taxon>
        <taxon>Brucella/Ochrobactrum group</taxon>
        <taxon>Brucella</taxon>
    </lineage>
</organism>
<reference key="1">
    <citation type="journal article" date="2002" name="Proc. Natl. Acad. Sci. U.S.A.">
        <title>The Brucella suis genome reveals fundamental similarities between animal and plant pathogens and symbionts.</title>
        <authorList>
            <person name="Paulsen I.T."/>
            <person name="Seshadri R."/>
            <person name="Nelson K.E."/>
            <person name="Eisen J.A."/>
            <person name="Heidelberg J.F."/>
            <person name="Read T.D."/>
            <person name="Dodson R.J."/>
            <person name="Umayam L.A."/>
            <person name="Brinkac L.M."/>
            <person name="Beanan M.J."/>
            <person name="Daugherty S.C."/>
            <person name="DeBoy R.T."/>
            <person name="Durkin A.S."/>
            <person name="Kolonay J.F."/>
            <person name="Madupu R."/>
            <person name="Nelson W.C."/>
            <person name="Ayodeji B."/>
            <person name="Kraul M."/>
            <person name="Shetty J."/>
            <person name="Malek J.A."/>
            <person name="Van Aken S.E."/>
            <person name="Riedmuller S."/>
            <person name="Tettelin H."/>
            <person name="Gill S.R."/>
            <person name="White O."/>
            <person name="Salzberg S.L."/>
            <person name="Hoover D.L."/>
            <person name="Lindler L.E."/>
            <person name="Halling S.M."/>
            <person name="Boyle S.M."/>
            <person name="Fraser C.M."/>
        </authorList>
    </citation>
    <scope>NUCLEOTIDE SEQUENCE [LARGE SCALE GENOMIC DNA]</scope>
    <source>
        <strain>1330</strain>
    </source>
</reference>
<reference key="2">
    <citation type="journal article" date="2011" name="J. Bacteriol.">
        <title>Revised genome sequence of Brucella suis 1330.</title>
        <authorList>
            <person name="Tae H."/>
            <person name="Shallom S."/>
            <person name="Settlage R."/>
            <person name="Preston D."/>
            <person name="Adams L.G."/>
            <person name="Garner H.R."/>
        </authorList>
    </citation>
    <scope>NUCLEOTIDE SEQUENCE [LARGE SCALE GENOMIC DNA]</scope>
    <source>
        <strain>1330</strain>
    </source>
</reference>
<comment type="catalytic activity">
    <reaction evidence="1">
        <text>2-formamido-N(1)-(5-O-phospho-beta-D-ribosyl)acetamidine + ATP = 5-amino-1-(5-phospho-beta-D-ribosyl)imidazole + ADP + phosphate + H(+)</text>
        <dbReference type="Rhea" id="RHEA:23032"/>
        <dbReference type="ChEBI" id="CHEBI:15378"/>
        <dbReference type="ChEBI" id="CHEBI:30616"/>
        <dbReference type="ChEBI" id="CHEBI:43474"/>
        <dbReference type="ChEBI" id="CHEBI:137981"/>
        <dbReference type="ChEBI" id="CHEBI:147287"/>
        <dbReference type="ChEBI" id="CHEBI:456216"/>
        <dbReference type="EC" id="6.3.3.1"/>
    </reaction>
</comment>
<comment type="pathway">
    <text evidence="1">Purine metabolism; IMP biosynthesis via de novo pathway; 5-amino-1-(5-phospho-D-ribosyl)imidazole from N(2)-formyl-N(1)-(5-phospho-D-ribosyl)glycinamide: step 2/2.</text>
</comment>
<comment type="subcellular location">
    <subcellularLocation>
        <location evidence="1">Cytoplasm</location>
    </subcellularLocation>
</comment>
<comment type="similarity">
    <text evidence="1">Belongs to the AIR synthase family.</text>
</comment>
<sequence length="359" mass="37447">MTMENKPAGQNGLTYAQAGVDIDAGNLMVEKIKPLVRSTRRPGADGEIGGFGGLFDLKAAGFKDPVLVAANDGVGTKLKIAIDADIHDTVGIDLVAMCVNDLVVQGAEPLFFLDYYATGKLSPDQGVAIVSGIAEGCRQAGCALIGGETAEMPGMYRDGDYDLAGFAVGAAERDRLLPRGDIAEGDIILGLASSGVHSNGFSLVRRIVELSGLGWKSQAPFQPGATLGEALLTPTRIYVKPLLAAIRACDGIKALAHITGGGFPDNIPRVLPKGLAAEIDLPAIAVPPVFSWLAKTGNVEPNEMLRTFNCGIGMIAVVNPAKVDEVIAALAAEGEKVVTLGRMTRREKDGVIYKGQLAL</sequence>
<evidence type="ECO:0000255" key="1">
    <source>
        <dbReference type="HAMAP-Rule" id="MF_00741"/>
    </source>
</evidence>
<protein>
    <recommendedName>
        <fullName evidence="1">Phosphoribosylformylglycinamidine cyclo-ligase</fullName>
        <ecNumber evidence="1">6.3.3.1</ecNumber>
    </recommendedName>
    <alternativeName>
        <fullName evidence="1">AIR synthase</fullName>
    </alternativeName>
    <alternativeName>
        <fullName evidence="1">AIRS</fullName>
    </alternativeName>
    <alternativeName>
        <fullName evidence="1">Phosphoribosyl-aminoimidazole synthetase</fullName>
    </alternativeName>
</protein>
<feature type="chain" id="PRO_0000148203" description="Phosphoribosylformylglycinamidine cyclo-ligase">
    <location>
        <begin position="1"/>
        <end position="359"/>
    </location>
</feature>
<gene>
    <name evidence="1" type="primary">purM</name>
    <name type="ordered locus">BR0710</name>
    <name type="ordered locus">BS1330_I0706</name>
</gene>
<proteinExistence type="inferred from homology"/>
<keyword id="KW-0067">ATP-binding</keyword>
<keyword id="KW-0963">Cytoplasm</keyword>
<keyword id="KW-0436">Ligase</keyword>
<keyword id="KW-0547">Nucleotide-binding</keyword>
<keyword id="KW-0658">Purine biosynthesis</keyword>
<name>PUR5_BRUSU</name>